<name>NRDR_METCA</name>
<feature type="chain" id="PRO_0000182317" description="Transcriptional repressor NrdR">
    <location>
        <begin position="1"/>
        <end position="165"/>
    </location>
</feature>
<feature type="domain" description="ATP-cone" evidence="1">
    <location>
        <begin position="49"/>
        <end position="139"/>
    </location>
</feature>
<feature type="zinc finger region" evidence="1">
    <location>
        <begin position="3"/>
        <end position="34"/>
    </location>
</feature>
<accession>Q607U5</accession>
<reference key="1">
    <citation type="journal article" date="2004" name="PLoS Biol.">
        <title>Genomic insights into methanotrophy: the complete genome sequence of Methylococcus capsulatus (Bath).</title>
        <authorList>
            <person name="Ward N.L."/>
            <person name="Larsen O."/>
            <person name="Sakwa J."/>
            <person name="Bruseth L."/>
            <person name="Khouri H.M."/>
            <person name="Durkin A.S."/>
            <person name="Dimitrov G."/>
            <person name="Jiang L."/>
            <person name="Scanlan D."/>
            <person name="Kang K.H."/>
            <person name="Lewis M.R."/>
            <person name="Nelson K.E."/>
            <person name="Methe B.A."/>
            <person name="Wu M."/>
            <person name="Heidelberg J.F."/>
            <person name="Paulsen I.T."/>
            <person name="Fouts D.E."/>
            <person name="Ravel J."/>
            <person name="Tettelin H."/>
            <person name="Ren Q."/>
            <person name="Read T.D."/>
            <person name="DeBoy R.T."/>
            <person name="Seshadri R."/>
            <person name="Salzberg S.L."/>
            <person name="Jensen H.B."/>
            <person name="Birkeland N.K."/>
            <person name="Nelson W.C."/>
            <person name="Dodson R.J."/>
            <person name="Grindhaug S.H."/>
            <person name="Holt I.E."/>
            <person name="Eidhammer I."/>
            <person name="Jonasen I."/>
            <person name="Vanaken S."/>
            <person name="Utterback T.R."/>
            <person name="Feldblyum T.V."/>
            <person name="Fraser C.M."/>
            <person name="Lillehaug J.R."/>
            <person name="Eisen J.A."/>
        </authorList>
    </citation>
    <scope>NUCLEOTIDE SEQUENCE [LARGE SCALE GENOMIC DNA]</scope>
    <source>
        <strain>ATCC 33009 / NCIMB 11132 / Bath</strain>
    </source>
</reference>
<organism>
    <name type="scientific">Methylococcus capsulatus (strain ATCC 33009 / NCIMB 11132 / Bath)</name>
    <dbReference type="NCBI Taxonomy" id="243233"/>
    <lineage>
        <taxon>Bacteria</taxon>
        <taxon>Pseudomonadati</taxon>
        <taxon>Pseudomonadota</taxon>
        <taxon>Gammaproteobacteria</taxon>
        <taxon>Methylococcales</taxon>
        <taxon>Methylococcaceae</taxon>
        <taxon>Methylococcus</taxon>
    </lineage>
</organism>
<keyword id="KW-0067">ATP-binding</keyword>
<keyword id="KW-0238">DNA-binding</keyword>
<keyword id="KW-0479">Metal-binding</keyword>
<keyword id="KW-0547">Nucleotide-binding</keyword>
<keyword id="KW-1185">Reference proteome</keyword>
<keyword id="KW-0678">Repressor</keyword>
<keyword id="KW-0804">Transcription</keyword>
<keyword id="KW-0805">Transcription regulation</keyword>
<keyword id="KW-0862">Zinc</keyword>
<keyword id="KW-0863">Zinc-finger</keyword>
<protein>
    <recommendedName>
        <fullName evidence="1">Transcriptional repressor NrdR</fullName>
    </recommendedName>
</protein>
<sequence>MRCPFCGAQDTRVVDSRLSHEGDQVRRRRECGECKERFTTYEAAELNMPRVVKSDGSRQPFREEKLRAGMLRALEKRPVSSDRVEAAITRIEKRLLATGEREVQSRLVGEYVMNELSQLDDVAYVRFASVYRRFEDVNQFREVIDRLESEPDSETAGRQADAFDA</sequence>
<dbReference type="EMBL" id="AE017282">
    <property type="protein sequence ID" value="AAU92303.1"/>
    <property type="molecule type" value="Genomic_DNA"/>
</dbReference>
<dbReference type="RefSeq" id="WP_010960917.1">
    <property type="nucleotide sequence ID" value="NC_002977.6"/>
</dbReference>
<dbReference type="SMR" id="Q607U5"/>
<dbReference type="STRING" id="243233.MCA1659"/>
<dbReference type="GeneID" id="88223915"/>
<dbReference type="KEGG" id="mca:MCA1659"/>
<dbReference type="eggNOG" id="COG1327">
    <property type="taxonomic scope" value="Bacteria"/>
</dbReference>
<dbReference type="HOGENOM" id="CLU_108412_0_0_6"/>
<dbReference type="Proteomes" id="UP000006821">
    <property type="component" value="Chromosome"/>
</dbReference>
<dbReference type="GO" id="GO:0005524">
    <property type="term" value="F:ATP binding"/>
    <property type="evidence" value="ECO:0007669"/>
    <property type="project" value="UniProtKB-KW"/>
</dbReference>
<dbReference type="GO" id="GO:0003677">
    <property type="term" value="F:DNA binding"/>
    <property type="evidence" value="ECO:0007669"/>
    <property type="project" value="UniProtKB-KW"/>
</dbReference>
<dbReference type="GO" id="GO:0008270">
    <property type="term" value="F:zinc ion binding"/>
    <property type="evidence" value="ECO:0007669"/>
    <property type="project" value="UniProtKB-UniRule"/>
</dbReference>
<dbReference type="GO" id="GO:0045892">
    <property type="term" value="P:negative regulation of DNA-templated transcription"/>
    <property type="evidence" value="ECO:0007669"/>
    <property type="project" value="UniProtKB-UniRule"/>
</dbReference>
<dbReference type="HAMAP" id="MF_00440">
    <property type="entry name" value="NrdR"/>
    <property type="match status" value="1"/>
</dbReference>
<dbReference type="InterPro" id="IPR005144">
    <property type="entry name" value="ATP-cone_dom"/>
</dbReference>
<dbReference type="InterPro" id="IPR055173">
    <property type="entry name" value="NrdR-like_N"/>
</dbReference>
<dbReference type="InterPro" id="IPR003796">
    <property type="entry name" value="RNR_NrdR-like"/>
</dbReference>
<dbReference type="NCBIfam" id="TIGR00244">
    <property type="entry name" value="transcriptional regulator NrdR"/>
    <property type="match status" value="1"/>
</dbReference>
<dbReference type="PANTHER" id="PTHR30455">
    <property type="entry name" value="TRANSCRIPTIONAL REPRESSOR NRDR"/>
    <property type="match status" value="1"/>
</dbReference>
<dbReference type="PANTHER" id="PTHR30455:SF2">
    <property type="entry name" value="TRANSCRIPTIONAL REPRESSOR NRDR"/>
    <property type="match status" value="1"/>
</dbReference>
<dbReference type="Pfam" id="PF03477">
    <property type="entry name" value="ATP-cone"/>
    <property type="match status" value="1"/>
</dbReference>
<dbReference type="Pfam" id="PF22811">
    <property type="entry name" value="Zn_ribbon_NrdR"/>
    <property type="match status" value="1"/>
</dbReference>
<dbReference type="PROSITE" id="PS51161">
    <property type="entry name" value="ATP_CONE"/>
    <property type="match status" value="1"/>
</dbReference>
<gene>
    <name evidence="1" type="primary">nrdR</name>
    <name type="ordered locus">MCA1659</name>
</gene>
<proteinExistence type="inferred from homology"/>
<evidence type="ECO:0000255" key="1">
    <source>
        <dbReference type="HAMAP-Rule" id="MF_00440"/>
    </source>
</evidence>
<comment type="function">
    <text evidence="1">Negatively regulates transcription of bacterial ribonucleotide reductase nrd genes and operons by binding to NrdR-boxes.</text>
</comment>
<comment type="cofactor">
    <cofactor evidence="1">
        <name>Zn(2+)</name>
        <dbReference type="ChEBI" id="CHEBI:29105"/>
    </cofactor>
    <text evidence="1">Binds 1 zinc ion.</text>
</comment>
<comment type="similarity">
    <text evidence="1">Belongs to the NrdR family.</text>
</comment>